<proteinExistence type="evidence at protein level"/>
<reference evidence="5" key="1">
    <citation type="journal article" date="2020" name="Toxicon">
        <title>Biochemical characterization of the venom from the Mexican scorpion Centruroides ornatus, a dangerous species to humans.</title>
        <authorList>
            <person name="Garcia-Guerrero I.A."/>
            <person name="Carcamo-Noriega E."/>
            <person name="Gomez-Lagunas F."/>
            <person name="Gonzalez-Santillan E."/>
            <person name="Zamudio F.Z."/>
            <person name="Gurrola G.B."/>
            <person name="Possani L.D."/>
        </authorList>
    </citation>
    <scope>PROTEIN SEQUENCE</scope>
    <scope>FUNCTION</scope>
    <scope>SUBCELLULAR LOCATION</scope>
    <scope>MASS SPECTROMETRY</scope>
    <source>
        <tissue evidence="4">Venom</tissue>
    </source>
</reference>
<keyword id="KW-0903">Direct protein sequencing</keyword>
<keyword id="KW-1015">Disulfide bond</keyword>
<keyword id="KW-0872">Ion channel impairing toxin</keyword>
<keyword id="KW-0528">Neurotoxin</keyword>
<keyword id="KW-0964">Secreted</keyword>
<keyword id="KW-0800">Toxin</keyword>
<keyword id="KW-0738">Voltage-gated sodium channel impairing toxin</keyword>
<sequence>KEDGYLVDKTGCKKSCYKLGENDYCNRECKWKHVGGSYGYCYGFGCYCEGLSDSTPTWPLPNKTC</sequence>
<evidence type="ECO:0000250" key="1">
    <source>
        <dbReference type="UniProtKB" id="C0HLF2"/>
    </source>
</evidence>
<evidence type="ECO:0000255" key="2">
    <source>
        <dbReference type="PROSITE-ProRule" id="PRU01210"/>
    </source>
</evidence>
<evidence type="ECO:0000269" key="3">
    <source>
    </source>
</evidence>
<evidence type="ECO:0000303" key="4">
    <source>
    </source>
</evidence>
<evidence type="ECO:0000305" key="5"/>
<evidence type="ECO:0000305" key="6">
    <source>
    </source>
</evidence>
<feature type="chain" id="PRO_0000450098" description="Toxin Co52">
    <location>
        <begin position="1"/>
        <end position="65"/>
    </location>
</feature>
<feature type="domain" description="LCN-type CS-alpha/beta" evidence="2">
    <location>
        <begin position="2"/>
        <end position="65"/>
    </location>
</feature>
<feature type="disulfide bond" evidence="2">
    <location>
        <begin position="12"/>
        <end position="65"/>
    </location>
</feature>
<feature type="disulfide bond" evidence="2">
    <location>
        <begin position="16"/>
        <end position="41"/>
    </location>
</feature>
<feature type="disulfide bond" evidence="2">
    <location>
        <begin position="25"/>
        <end position="46"/>
    </location>
</feature>
<feature type="disulfide bond" evidence="2">
    <location>
        <begin position="29"/>
        <end position="48"/>
    </location>
</feature>
<protein>
    <recommendedName>
        <fullName evidence="4">Toxin Co52</fullName>
    </recommendedName>
</protein>
<dbReference type="SMR" id="C0HLF8"/>
<dbReference type="GO" id="GO:0005576">
    <property type="term" value="C:extracellular region"/>
    <property type="evidence" value="ECO:0007669"/>
    <property type="project" value="UniProtKB-SubCell"/>
</dbReference>
<dbReference type="GO" id="GO:0019871">
    <property type="term" value="F:sodium channel inhibitor activity"/>
    <property type="evidence" value="ECO:0007669"/>
    <property type="project" value="InterPro"/>
</dbReference>
<dbReference type="GO" id="GO:0090729">
    <property type="term" value="F:toxin activity"/>
    <property type="evidence" value="ECO:0007669"/>
    <property type="project" value="UniProtKB-KW"/>
</dbReference>
<dbReference type="GO" id="GO:0006952">
    <property type="term" value="P:defense response"/>
    <property type="evidence" value="ECO:0007669"/>
    <property type="project" value="InterPro"/>
</dbReference>
<dbReference type="CDD" id="cd23106">
    <property type="entry name" value="neurotoxins_LC_scorpion"/>
    <property type="match status" value="1"/>
</dbReference>
<dbReference type="FunFam" id="3.30.30.10:FF:000002">
    <property type="entry name" value="Alpha-like toxin BmK-M1"/>
    <property type="match status" value="1"/>
</dbReference>
<dbReference type="Gene3D" id="3.30.30.10">
    <property type="entry name" value="Knottin, scorpion toxin-like"/>
    <property type="match status" value="1"/>
</dbReference>
<dbReference type="InterPro" id="IPR044062">
    <property type="entry name" value="LCN-type_CS_alpha_beta_dom"/>
</dbReference>
<dbReference type="InterPro" id="IPR003614">
    <property type="entry name" value="Scorpion_toxin-like"/>
</dbReference>
<dbReference type="InterPro" id="IPR036574">
    <property type="entry name" value="Scorpion_toxin-like_sf"/>
</dbReference>
<dbReference type="InterPro" id="IPR018218">
    <property type="entry name" value="Scorpion_toxinL"/>
</dbReference>
<dbReference type="InterPro" id="IPR002061">
    <property type="entry name" value="Scorpion_toxinL/defensin"/>
</dbReference>
<dbReference type="Pfam" id="PF00537">
    <property type="entry name" value="Toxin_3"/>
    <property type="match status" value="1"/>
</dbReference>
<dbReference type="PRINTS" id="PR00285">
    <property type="entry name" value="SCORPNTOXIN"/>
</dbReference>
<dbReference type="PRINTS" id="PR00284">
    <property type="entry name" value="TOXIN"/>
</dbReference>
<dbReference type="SMART" id="SM00505">
    <property type="entry name" value="Knot1"/>
    <property type="match status" value="1"/>
</dbReference>
<dbReference type="SUPFAM" id="SSF57095">
    <property type="entry name" value="Scorpion toxin-like"/>
    <property type="match status" value="1"/>
</dbReference>
<dbReference type="PROSITE" id="PS51863">
    <property type="entry name" value="LCN_CSAB"/>
    <property type="match status" value="1"/>
</dbReference>
<organism evidence="4">
    <name type="scientific">Centruroides ornatus</name>
    <name type="common">Scorpion</name>
    <name type="synonym">Centruroides infamatus ornatus</name>
    <dbReference type="NCBI Taxonomy" id="2338500"/>
    <lineage>
        <taxon>Eukaryota</taxon>
        <taxon>Metazoa</taxon>
        <taxon>Ecdysozoa</taxon>
        <taxon>Arthropoda</taxon>
        <taxon>Chelicerata</taxon>
        <taxon>Arachnida</taxon>
        <taxon>Scorpiones</taxon>
        <taxon>Buthida</taxon>
        <taxon>Buthoidea</taxon>
        <taxon>Buthidae</taxon>
        <taxon>Centruroides</taxon>
    </lineage>
</organism>
<accession>C0HLF8</accession>
<name>SC52_CENOR</name>
<comment type="function">
    <text evidence="1 3">Beta toxins bind voltage-independently at site-4 of sodium channels (Nav) and shift the voltage of activation toward more negative potentials thereby affecting sodium channel activation and promoting spontaneous and repetitive firing (By similarity). Not toxic to mice, chicks, crickets or woodlice (at 5 ug) (PubMed:31734253).</text>
</comment>
<comment type="subcellular location">
    <subcellularLocation>
        <location evidence="3">Secreted</location>
    </subcellularLocation>
</comment>
<comment type="tissue specificity">
    <text evidence="6">Expressed by the venom gland.</text>
</comment>
<comment type="domain">
    <text evidence="5">Has the structural arrangement of an alpha-helix connected to antiparallel beta-sheets by disulfide bonds (CS-alpha/beta).</text>
</comment>
<comment type="mass spectrometry"/>
<comment type="similarity">
    <text evidence="5">Belongs to the long (4 C-C) scorpion toxin superfamily. Sodium channel inhibitor family. Beta subfamily.</text>
</comment>